<reference key="1">
    <citation type="journal article" date="1997" name="J. Bacteriol.">
        <title>Putative evolutionary origin of plasmids carrying the genes involved in leucine biosynthesis in Buchnera aphidicola (endosymbiont of aphids).</title>
        <authorList>
            <person name="van Ham R.C.H.J."/>
            <person name="Moya A."/>
            <person name="Latorre A."/>
        </authorList>
    </citation>
    <scope>NUCLEOTIDE SEQUENCE [GENOMIC DNA]</scope>
</reference>
<name>LEUC_BUCTS</name>
<sequence length="466" mass="51930">MGQTLYEKLYNSHIIYEDKNTLPIIYIDLHLLHEVTSPQAFESLKNKKRIVHAPIKTFATMDHNVSTKTNKISASGKAAQIQMQQLINNCKDFNIKLYDLNHINQGIVHVMGPEQGLTLPGMTIVCGDSHTSTHGAFGTLAFGIGTSEVEHVLATQTLKQARSKTMKIGINGILKPYITAKDVILYIIKKVGTAFGTGYVVEFSGETIENLTMEGRMTICNMVIEMGAKSGIIAPDATTYKYLKNLPYAPKKEKWKNALEYWKNLKTDNDAKFDKIVKFDVSQIEPQITWGTNPSQTINITESNPDPKKINNIIDKQATEKALKYMNLKPNQKMINLVVDKVFIGSCTNSRIEDLRIASKIIKNKKVAKTTKAIVVPGSKLVKIQAEKEGLDKIFINAGFEWRLPGCSMCLAMNDDKLNRGERCASTSNRNFEDRQGRGGRTHLVSPITAAAAAIFGYFVDIKNIL</sequence>
<evidence type="ECO:0000255" key="1">
    <source>
        <dbReference type="HAMAP-Rule" id="MF_01026"/>
    </source>
</evidence>
<geneLocation type="plasmid">
    <name>pBTs1</name>
</geneLocation>
<proteinExistence type="inferred from homology"/>
<organism>
    <name type="scientific">Buchnera aphidicola subsp. Thelaxes suberi</name>
    <dbReference type="NCBI Taxonomy" id="98797"/>
    <lineage>
        <taxon>Bacteria</taxon>
        <taxon>Pseudomonadati</taxon>
        <taxon>Pseudomonadota</taxon>
        <taxon>Gammaproteobacteria</taxon>
        <taxon>Enterobacterales</taxon>
        <taxon>Erwiniaceae</taxon>
        <taxon>Buchnera</taxon>
    </lineage>
</organism>
<dbReference type="EC" id="4.2.1.33" evidence="1"/>
<dbReference type="EMBL" id="Y11966">
    <property type="protein sequence ID" value="CAA72703.1"/>
    <property type="molecule type" value="Genomic_DNA"/>
</dbReference>
<dbReference type="SMR" id="O31293"/>
<dbReference type="UniPathway" id="UPA00048">
    <property type="reaction ID" value="UER00071"/>
</dbReference>
<dbReference type="GO" id="GO:0003861">
    <property type="term" value="F:3-isopropylmalate dehydratase activity"/>
    <property type="evidence" value="ECO:0007669"/>
    <property type="project" value="UniProtKB-UniRule"/>
</dbReference>
<dbReference type="GO" id="GO:0051539">
    <property type="term" value="F:4 iron, 4 sulfur cluster binding"/>
    <property type="evidence" value="ECO:0007669"/>
    <property type="project" value="UniProtKB-KW"/>
</dbReference>
<dbReference type="GO" id="GO:0046872">
    <property type="term" value="F:metal ion binding"/>
    <property type="evidence" value="ECO:0007669"/>
    <property type="project" value="UniProtKB-KW"/>
</dbReference>
<dbReference type="GO" id="GO:0009098">
    <property type="term" value="P:L-leucine biosynthetic process"/>
    <property type="evidence" value="ECO:0007669"/>
    <property type="project" value="UniProtKB-UniRule"/>
</dbReference>
<dbReference type="CDD" id="cd01583">
    <property type="entry name" value="IPMI"/>
    <property type="match status" value="1"/>
</dbReference>
<dbReference type="FunFam" id="3.30.499.10:FF:000007">
    <property type="entry name" value="3-isopropylmalate dehydratase large subunit"/>
    <property type="match status" value="1"/>
</dbReference>
<dbReference type="Gene3D" id="3.30.499.10">
    <property type="entry name" value="Aconitase, domain 3"/>
    <property type="match status" value="2"/>
</dbReference>
<dbReference type="HAMAP" id="MF_01026">
    <property type="entry name" value="LeuC_type1"/>
    <property type="match status" value="1"/>
</dbReference>
<dbReference type="InterPro" id="IPR004430">
    <property type="entry name" value="3-IsopropMal_deHydase_lsu"/>
</dbReference>
<dbReference type="InterPro" id="IPR015931">
    <property type="entry name" value="Acnase/IPM_dHydase_lsu_aba_1/3"/>
</dbReference>
<dbReference type="InterPro" id="IPR001030">
    <property type="entry name" value="Acoase/IPM_deHydtase_lsu_aba"/>
</dbReference>
<dbReference type="InterPro" id="IPR018136">
    <property type="entry name" value="Aconitase_4Fe-4S_BS"/>
</dbReference>
<dbReference type="InterPro" id="IPR036008">
    <property type="entry name" value="Aconitase_4Fe-4S_dom"/>
</dbReference>
<dbReference type="InterPro" id="IPR050067">
    <property type="entry name" value="IPM_dehydratase_rel_enz"/>
</dbReference>
<dbReference type="InterPro" id="IPR033941">
    <property type="entry name" value="IPMI_cat"/>
</dbReference>
<dbReference type="NCBIfam" id="TIGR00170">
    <property type="entry name" value="leuC"/>
    <property type="match status" value="1"/>
</dbReference>
<dbReference type="NCBIfam" id="NF004016">
    <property type="entry name" value="PRK05478.1"/>
    <property type="match status" value="1"/>
</dbReference>
<dbReference type="NCBIfam" id="NF009116">
    <property type="entry name" value="PRK12466.1"/>
    <property type="match status" value="1"/>
</dbReference>
<dbReference type="PANTHER" id="PTHR43822:SF9">
    <property type="entry name" value="3-ISOPROPYLMALATE DEHYDRATASE"/>
    <property type="match status" value="1"/>
</dbReference>
<dbReference type="PANTHER" id="PTHR43822">
    <property type="entry name" value="HOMOACONITASE, MITOCHONDRIAL-RELATED"/>
    <property type="match status" value="1"/>
</dbReference>
<dbReference type="Pfam" id="PF00330">
    <property type="entry name" value="Aconitase"/>
    <property type="match status" value="1"/>
</dbReference>
<dbReference type="PRINTS" id="PR00415">
    <property type="entry name" value="ACONITASE"/>
</dbReference>
<dbReference type="SUPFAM" id="SSF53732">
    <property type="entry name" value="Aconitase iron-sulfur domain"/>
    <property type="match status" value="1"/>
</dbReference>
<dbReference type="PROSITE" id="PS00450">
    <property type="entry name" value="ACONITASE_1"/>
    <property type="match status" value="1"/>
</dbReference>
<dbReference type="PROSITE" id="PS01244">
    <property type="entry name" value="ACONITASE_2"/>
    <property type="match status" value="1"/>
</dbReference>
<comment type="function">
    <text evidence="1">Catalyzes the isomerization between 2-isopropylmalate and 3-isopropylmalate, via the formation of 2-isopropylmaleate.</text>
</comment>
<comment type="catalytic activity">
    <reaction evidence="1">
        <text>(2R,3S)-3-isopropylmalate = (2S)-2-isopropylmalate</text>
        <dbReference type="Rhea" id="RHEA:32287"/>
        <dbReference type="ChEBI" id="CHEBI:1178"/>
        <dbReference type="ChEBI" id="CHEBI:35121"/>
        <dbReference type="EC" id="4.2.1.33"/>
    </reaction>
</comment>
<comment type="cofactor">
    <cofactor evidence="1">
        <name>[4Fe-4S] cluster</name>
        <dbReference type="ChEBI" id="CHEBI:49883"/>
    </cofactor>
    <text evidence="1">Binds 1 [4Fe-4S] cluster per subunit.</text>
</comment>
<comment type="pathway">
    <text evidence="1">Amino-acid biosynthesis; L-leucine biosynthesis; L-leucine from 3-methyl-2-oxobutanoate: step 2/4.</text>
</comment>
<comment type="subunit">
    <text evidence="1">Heterodimer of LeuC and LeuD.</text>
</comment>
<comment type="similarity">
    <text evidence="1">Belongs to the aconitase/IPM isomerase family. LeuC type 1 subfamily.</text>
</comment>
<keyword id="KW-0004">4Fe-4S</keyword>
<keyword id="KW-0028">Amino-acid biosynthesis</keyword>
<keyword id="KW-0100">Branched-chain amino acid biosynthesis</keyword>
<keyword id="KW-0408">Iron</keyword>
<keyword id="KW-0411">Iron-sulfur</keyword>
<keyword id="KW-0432">Leucine biosynthesis</keyword>
<keyword id="KW-0456">Lyase</keyword>
<keyword id="KW-0479">Metal-binding</keyword>
<keyword id="KW-0614">Plasmid</keyword>
<feature type="chain" id="PRO_0000076722" description="3-isopropylmalate dehydratase large subunit">
    <location>
        <begin position="1"/>
        <end position="466"/>
    </location>
</feature>
<feature type="binding site" evidence="1">
    <location>
        <position position="347"/>
    </location>
    <ligand>
        <name>[4Fe-4S] cluster</name>
        <dbReference type="ChEBI" id="CHEBI:49883"/>
    </ligand>
</feature>
<feature type="binding site" evidence="1">
    <location>
        <position position="407"/>
    </location>
    <ligand>
        <name>[4Fe-4S] cluster</name>
        <dbReference type="ChEBI" id="CHEBI:49883"/>
    </ligand>
</feature>
<feature type="binding site" evidence="1">
    <location>
        <position position="410"/>
    </location>
    <ligand>
        <name>[4Fe-4S] cluster</name>
        <dbReference type="ChEBI" id="CHEBI:49883"/>
    </ligand>
</feature>
<protein>
    <recommendedName>
        <fullName evidence="1">3-isopropylmalate dehydratase large subunit</fullName>
        <ecNumber evidence="1">4.2.1.33</ecNumber>
    </recommendedName>
    <alternativeName>
        <fullName evidence="1">Alpha-IPM isomerase</fullName>
        <shortName evidence="1">IPMI</shortName>
    </alternativeName>
    <alternativeName>
        <fullName evidence="1">Isopropylmalate isomerase</fullName>
    </alternativeName>
</protein>
<gene>
    <name evidence="1" type="primary">leuC</name>
</gene>
<accession>O31293</accession>